<reference key="1">
    <citation type="journal article" date="2007" name="PLoS Genet.">
        <title>Patterns and implications of gene gain and loss in the evolution of Prochlorococcus.</title>
        <authorList>
            <person name="Kettler G.C."/>
            <person name="Martiny A.C."/>
            <person name="Huang K."/>
            <person name="Zucker J."/>
            <person name="Coleman M.L."/>
            <person name="Rodrigue S."/>
            <person name="Chen F."/>
            <person name="Lapidus A."/>
            <person name="Ferriera S."/>
            <person name="Johnson J."/>
            <person name="Steglich C."/>
            <person name="Church G.M."/>
            <person name="Richardson P."/>
            <person name="Chisholm S.W."/>
        </authorList>
    </citation>
    <scope>NUCLEOTIDE SEQUENCE [LARGE SCALE GENOMIC DNA]</scope>
    <source>
        <strain>MIT 9515</strain>
    </source>
</reference>
<name>SYC_PROM5</name>
<accession>A2BXK1</accession>
<organism>
    <name type="scientific">Prochlorococcus marinus (strain MIT 9515)</name>
    <dbReference type="NCBI Taxonomy" id="167542"/>
    <lineage>
        <taxon>Bacteria</taxon>
        <taxon>Bacillati</taxon>
        <taxon>Cyanobacteriota</taxon>
        <taxon>Cyanophyceae</taxon>
        <taxon>Synechococcales</taxon>
        <taxon>Prochlorococcaceae</taxon>
        <taxon>Prochlorococcus</taxon>
    </lineage>
</organism>
<evidence type="ECO:0000255" key="1">
    <source>
        <dbReference type="HAMAP-Rule" id="MF_00041"/>
    </source>
</evidence>
<keyword id="KW-0030">Aminoacyl-tRNA synthetase</keyword>
<keyword id="KW-0067">ATP-binding</keyword>
<keyword id="KW-0963">Cytoplasm</keyword>
<keyword id="KW-0436">Ligase</keyword>
<keyword id="KW-0479">Metal-binding</keyword>
<keyword id="KW-0547">Nucleotide-binding</keyword>
<keyword id="KW-0648">Protein biosynthesis</keyword>
<keyword id="KW-0862">Zinc</keyword>
<sequence length="492" mass="56816">MIKLFNTLSKNVEVFKPIDEEVKIYCCGVTVYDLCHLGHARSYIAWDVLRRFLIYSDYKVKFVQNFTDIDDKILKRAKEENSSMKQVSEKNIAEFHKDMDALGIMRPDSMPKATNHICNICSFIKVLEKKGFAYARGGDVYYSVFKNKDYGKLSNQNILEQNINQQGRMTSDESNKKNNPQDFALWKKAKENEPSFDSPWGKGRPGWHIECSAMVKDELGETIDIHLGGADLIFPHHENEIAQSESANNKKLANYWLHNGMVNVNGQKMSKSLKNFTTIRDLLDSGTSPMTLRYFVLTVNYRKPLDFTDEALKSASEAWKTINVALSFFDITKKENLSIEVNETNEFVEEKYKEKINYEISQKKIKFTNALNNDLNTAGAIAIIYELAKPLKNFINQFQRIKNLDINTNEKFHLRETLKTLEELTQVLGLKKEEIIIENKITEEQIISLINKRLIAKKGRDYAEADKIRNSLKEKGIELIDQSTELTTWVRL</sequence>
<proteinExistence type="inferred from homology"/>
<feature type="chain" id="PRO_0000332875" description="Cysteine--tRNA ligase">
    <location>
        <begin position="1"/>
        <end position="492"/>
    </location>
</feature>
<feature type="short sequence motif" description="'HIGH' region">
    <location>
        <begin position="29"/>
        <end position="39"/>
    </location>
</feature>
<feature type="short sequence motif" description="'KMSKS' region">
    <location>
        <begin position="268"/>
        <end position="272"/>
    </location>
</feature>
<feature type="binding site" evidence="1">
    <location>
        <position position="27"/>
    </location>
    <ligand>
        <name>Zn(2+)</name>
        <dbReference type="ChEBI" id="CHEBI:29105"/>
    </ligand>
</feature>
<feature type="binding site" evidence="1">
    <location>
        <position position="211"/>
    </location>
    <ligand>
        <name>Zn(2+)</name>
        <dbReference type="ChEBI" id="CHEBI:29105"/>
    </ligand>
</feature>
<feature type="binding site" evidence="1">
    <location>
        <position position="236"/>
    </location>
    <ligand>
        <name>Zn(2+)</name>
        <dbReference type="ChEBI" id="CHEBI:29105"/>
    </ligand>
</feature>
<feature type="binding site" evidence="1">
    <location>
        <position position="240"/>
    </location>
    <ligand>
        <name>Zn(2+)</name>
        <dbReference type="ChEBI" id="CHEBI:29105"/>
    </ligand>
</feature>
<feature type="binding site" evidence="1">
    <location>
        <position position="271"/>
    </location>
    <ligand>
        <name>ATP</name>
        <dbReference type="ChEBI" id="CHEBI:30616"/>
    </ligand>
</feature>
<gene>
    <name evidence="1" type="primary">cysS</name>
    <name type="ordered locus">P9515_13051</name>
</gene>
<protein>
    <recommendedName>
        <fullName evidence="1">Cysteine--tRNA ligase</fullName>
        <ecNumber evidence="1">6.1.1.16</ecNumber>
    </recommendedName>
    <alternativeName>
        <fullName evidence="1">Cysteinyl-tRNA synthetase</fullName>
        <shortName evidence="1">CysRS</shortName>
    </alternativeName>
</protein>
<comment type="catalytic activity">
    <reaction evidence="1">
        <text>tRNA(Cys) + L-cysteine + ATP = L-cysteinyl-tRNA(Cys) + AMP + diphosphate</text>
        <dbReference type="Rhea" id="RHEA:17773"/>
        <dbReference type="Rhea" id="RHEA-COMP:9661"/>
        <dbReference type="Rhea" id="RHEA-COMP:9679"/>
        <dbReference type="ChEBI" id="CHEBI:30616"/>
        <dbReference type="ChEBI" id="CHEBI:33019"/>
        <dbReference type="ChEBI" id="CHEBI:35235"/>
        <dbReference type="ChEBI" id="CHEBI:78442"/>
        <dbReference type="ChEBI" id="CHEBI:78517"/>
        <dbReference type="ChEBI" id="CHEBI:456215"/>
        <dbReference type="EC" id="6.1.1.16"/>
    </reaction>
</comment>
<comment type="cofactor">
    <cofactor evidence="1">
        <name>Zn(2+)</name>
        <dbReference type="ChEBI" id="CHEBI:29105"/>
    </cofactor>
    <text evidence="1">Binds 1 zinc ion per subunit.</text>
</comment>
<comment type="subunit">
    <text evidence="1">Monomer.</text>
</comment>
<comment type="subcellular location">
    <subcellularLocation>
        <location evidence="1">Cytoplasm</location>
    </subcellularLocation>
</comment>
<comment type="similarity">
    <text evidence="1">Belongs to the class-I aminoacyl-tRNA synthetase family.</text>
</comment>
<dbReference type="EC" id="6.1.1.16" evidence="1"/>
<dbReference type="EMBL" id="CP000552">
    <property type="protein sequence ID" value="ABM72512.1"/>
    <property type="molecule type" value="Genomic_DNA"/>
</dbReference>
<dbReference type="RefSeq" id="WP_011820611.1">
    <property type="nucleotide sequence ID" value="NC_008817.1"/>
</dbReference>
<dbReference type="SMR" id="A2BXK1"/>
<dbReference type="STRING" id="167542.P9515_13051"/>
<dbReference type="GeneID" id="60200652"/>
<dbReference type="KEGG" id="pmc:P9515_13051"/>
<dbReference type="eggNOG" id="COG0215">
    <property type="taxonomic scope" value="Bacteria"/>
</dbReference>
<dbReference type="HOGENOM" id="CLU_013528_0_1_3"/>
<dbReference type="OrthoDB" id="9815130at2"/>
<dbReference type="Proteomes" id="UP000001589">
    <property type="component" value="Chromosome"/>
</dbReference>
<dbReference type="GO" id="GO:0005829">
    <property type="term" value="C:cytosol"/>
    <property type="evidence" value="ECO:0007669"/>
    <property type="project" value="TreeGrafter"/>
</dbReference>
<dbReference type="GO" id="GO:0005524">
    <property type="term" value="F:ATP binding"/>
    <property type="evidence" value="ECO:0007669"/>
    <property type="project" value="UniProtKB-UniRule"/>
</dbReference>
<dbReference type="GO" id="GO:0004817">
    <property type="term" value="F:cysteine-tRNA ligase activity"/>
    <property type="evidence" value="ECO:0007669"/>
    <property type="project" value="UniProtKB-UniRule"/>
</dbReference>
<dbReference type="GO" id="GO:0008270">
    <property type="term" value="F:zinc ion binding"/>
    <property type="evidence" value="ECO:0007669"/>
    <property type="project" value="UniProtKB-UniRule"/>
</dbReference>
<dbReference type="GO" id="GO:0006423">
    <property type="term" value="P:cysteinyl-tRNA aminoacylation"/>
    <property type="evidence" value="ECO:0007669"/>
    <property type="project" value="UniProtKB-UniRule"/>
</dbReference>
<dbReference type="CDD" id="cd00672">
    <property type="entry name" value="CysRS_core"/>
    <property type="match status" value="1"/>
</dbReference>
<dbReference type="FunFam" id="3.40.50.620:FF:000009">
    <property type="entry name" value="Cysteine--tRNA ligase"/>
    <property type="match status" value="1"/>
</dbReference>
<dbReference type="Gene3D" id="1.20.120.1910">
    <property type="entry name" value="Cysteine-tRNA ligase, C-terminal anti-codon recognition domain"/>
    <property type="match status" value="1"/>
</dbReference>
<dbReference type="Gene3D" id="3.40.50.620">
    <property type="entry name" value="HUPs"/>
    <property type="match status" value="1"/>
</dbReference>
<dbReference type="HAMAP" id="MF_00041">
    <property type="entry name" value="Cys_tRNA_synth"/>
    <property type="match status" value="1"/>
</dbReference>
<dbReference type="InterPro" id="IPR015803">
    <property type="entry name" value="Cys-tRNA-ligase"/>
</dbReference>
<dbReference type="InterPro" id="IPR015273">
    <property type="entry name" value="Cys-tRNA-synt_Ia_DALR"/>
</dbReference>
<dbReference type="InterPro" id="IPR024909">
    <property type="entry name" value="Cys-tRNA/MSH_ligase"/>
</dbReference>
<dbReference type="InterPro" id="IPR014729">
    <property type="entry name" value="Rossmann-like_a/b/a_fold"/>
</dbReference>
<dbReference type="InterPro" id="IPR032678">
    <property type="entry name" value="tRNA-synt_1_cat_dom"/>
</dbReference>
<dbReference type="InterPro" id="IPR009080">
    <property type="entry name" value="tRNAsynth_Ia_anticodon-bd"/>
</dbReference>
<dbReference type="NCBIfam" id="TIGR00435">
    <property type="entry name" value="cysS"/>
    <property type="match status" value="1"/>
</dbReference>
<dbReference type="PANTHER" id="PTHR10890:SF3">
    <property type="entry name" value="CYSTEINE--TRNA LIGASE, CYTOPLASMIC"/>
    <property type="match status" value="1"/>
</dbReference>
<dbReference type="PANTHER" id="PTHR10890">
    <property type="entry name" value="CYSTEINYL-TRNA SYNTHETASE"/>
    <property type="match status" value="1"/>
</dbReference>
<dbReference type="Pfam" id="PF09190">
    <property type="entry name" value="DALR_2"/>
    <property type="match status" value="1"/>
</dbReference>
<dbReference type="Pfam" id="PF01406">
    <property type="entry name" value="tRNA-synt_1e"/>
    <property type="match status" value="1"/>
</dbReference>
<dbReference type="PRINTS" id="PR00983">
    <property type="entry name" value="TRNASYNTHCYS"/>
</dbReference>
<dbReference type="SMART" id="SM00840">
    <property type="entry name" value="DALR_2"/>
    <property type="match status" value="1"/>
</dbReference>
<dbReference type="SUPFAM" id="SSF47323">
    <property type="entry name" value="Anticodon-binding domain of a subclass of class I aminoacyl-tRNA synthetases"/>
    <property type="match status" value="1"/>
</dbReference>
<dbReference type="SUPFAM" id="SSF52374">
    <property type="entry name" value="Nucleotidylyl transferase"/>
    <property type="match status" value="1"/>
</dbReference>